<protein>
    <recommendedName>
        <fullName evidence="1">3-dehydroquinate synthase</fullName>
        <shortName evidence="1">DHQS</shortName>
        <ecNumber evidence="1">4.2.3.4</ecNumber>
    </recommendedName>
</protein>
<proteinExistence type="inferred from homology"/>
<accession>B6JKL2</accession>
<evidence type="ECO:0000255" key="1">
    <source>
        <dbReference type="HAMAP-Rule" id="MF_00110"/>
    </source>
</evidence>
<keyword id="KW-0028">Amino-acid biosynthesis</keyword>
<keyword id="KW-0057">Aromatic amino acid biosynthesis</keyword>
<keyword id="KW-0170">Cobalt</keyword>
<keyword id="KW-0963">Cytoplasm</keyword>
<keyword id="KW-0456">Lyase</keyword>
<keyword id="KW-0479">Metal-binding</keyword>
<keyword id="KW-0520">NAD</keyword>
<keyword id="KW-0547">Nucleotide-binding</keyword>
<keyword id="KW-0862">Zinc</keyword>
<name>AROB_HELP2</name>
<gene>
    <name evidence="1" type="primary">aroB</name>
    <name type="ordered locus">HPP12_0282</name>
</gene>
<comment type="function">
    <text evidence="1">Catalyzes the conversion of 3-deoxy-D-arabino-heptulosonate 7-phosphate (DAHP) to dehydroquinate (DHQ).</text>
</comment>
<comment type="catalytic activity">
    <reaction evidence="1">
        <text>7-phospho-2-dehydro-3-deoxy-D-arabino-heptonate = 3-dehydroquinate + phosphate</text>
        <dbReference type="Rhea" id="RHEA:21968"/>
        <dbReference type="ChEBI" id="CHEBI:32364"/>
        <dbReference type="ChEBI" id="CHEBI:43474"/>
        <dbReference type="ChEBI" id="CHEBI:58394"/>
        <dbReference type="EC" id="4.2.3.4"/>
    </reaction>
</comment>
<comment type="cofactor">
    <cofactor evidence="1">
        <name>Co(2+)</name>
        <dbReference type="ChEBI" id="CHEBI:48828"/>
    </cofactor>
    <cofactor evidence="1">
        <name>Zn(2+)</name>
        <dbReference type="ChEBI" id="CHEBI:29105"/>
    </cofactor>
    <text evidence="1">Binds 1 divalent metal cation per subunit. Can use either Co(2+) or Zn(2+).</text>
</comment>
<comment type="cofactor">
    <cofactor evidence="1">
        <name>NAD(+)</name>
        <dbReference type="ChEBI" id="CHEBI:57540"/>
    </cofactor>
</comment>
<comment type="pathway">
    <text evidence="1">Metabolic intermediate biosynthesis; chorismate biosynthesis; chorismate from D-erythrose 4-phosphate and phosphoenolpyruvate: step 2/7.</text>
</comment>
<comment type="subcellular location">
    <subcellularLocation>
        <location evidence="1">Cytoplasm</location>
    </subcellularLocation>
</comment>
<comment type="similarity">
    <text evidence="1">Belongs to the sugar phosphate cyclases superfamily. Dehydroquinate synthase family.</text>
</comment>
<dbReference type="EC" id="4.2.3.4" evidence="1"/>
<dbReference type="EMBL" id="CP001217">
    <property type="protein sequence ID" value="ACJ07440.1"/>
    <property type="molecule type" value="Genomic_DNA"/>
</dbReference>
<dbReference type="SMR" id="B6JKL2"/>
<dbReference type="KEGG" id="hpp:HPP12_0282"/>
<dbReference type="HOGENOM" id="CLU_001201_0_2_7"/>
<dbReference type="UniPathway" id="UPA00053">
    <property type="reaction ID" value="UER00085"/>
</dbReference>
<dbReference type="Proteomes" id="UP000008198">
    <property type="component" value="Chromosome"/>
</dbReference>
<dbReference type="GO" id="GO:0005737">
    <property type="term" value="C:cytoplasm"/>
    <property type="evidence" value="ECO:0007669"/>
    <property type="project" value="UniProtKB-SubCell"/>
</dbReference>
<dbReference type="GO" id="GO:0003856">
    <property type="term" value="F:3-dehydroquinate synthase activity"/>
    <property type="evidence" value="ECO:0007669"/>
    <property type="project" value="UniProtKB-UniRule"/>
</dbReference>
<dbReference type="GO" id="GO:0046872">
    <property type="term" value="F:metal ion binding"/>
    <property type="evidence" value="ECO:0007669"/>
    <property type="project" value="UniProtKB-KW"/>
</dbReference>
<dbReference type="GO" id="GO:0000166">
    <property type="term" value="F:nucleotide binding"/>
    <property type="evidence" value="ECO:0007669"/>
    <property type="project" value="UniProtKB-KW"/>
</dbReference>
<dbReference type="GO" id="GO:0008652">
    <property type="term" value="P:amino acid biosynthetic process"/>
    <property type="evidence" value="ECO:0007669"/>
    <property type="project" value="UniProtKB-KW"/>
</dbReference>
<dbReference type="GO" id="GO:0009073">
    <property type="term" value="P:aromatic amino acid family biosynthetic process"/>
    <property type="evidence" value="ECO:0007669"/>
    <property type="project" value="UniProtKB-KW"/>
</dbReference>
<dbReference type="GO" id="GO:0009423">
    <property type="term" value="P:chorismate biosynthetic process"/>
    <property type="evidence" value="ECO:0007669"/>
    <property type="project" value="UniProtKB-UniRule"/>
</dbReference>
<dbReference type="CDD" id="cd08195">
    <property type="entry name" value="DHQS"/>
    <property type="match status" value="1"/>
</dbReference>
<dbReference type="FunFam" id="1.20.1090.10:FF:000025">
    <property type="entry name" value="3-dehydroquinate synthase"/>
    <property type="match status" value="1"/>
</dbReference>
<dbReference type="FunFam" id="3.40.50.1970:FF:000030">
    <property type="entry name" value="3-dehydroquinate synthase"/>
    <property type="match status" value="1"/>
</dbReference>
<dbReference type="Gene3D" id="3.40.50.1970">
    <property type="match status" value="1"/>
</dbReference>
<dbReference type="Gene3D" id="1.20.1090.10">
    <property type="entry name" value="Dehydroquinate synthase-like - alpha domain"/>
    <property type="match status" value="1"/>
</dbReference>
<dbReference type="HAMAP" id="MF_00110">
    <property type="entry name" value="DHQ_synthase"/>
    <property type="match status" value="1"/>
</dbReference>
<dbReference type="InterPro" id="IPR050071">
    <property type="entry name" value="Dehydroquinate_synthase"/>
</dbReference>
<dbReference type="InterPro" id="IPR016037">
    <property type="entry name" value="DHQ_synth_AroB"/>
</dbReference>
<dbReference type="InterPro" id="IPR030963">
    <property type="entry name" value="DHQ_synth_fam"/>
</dbReference>
<dbReference type="InterPro" id="IPR030960">
    <property type="entry name" value="DHQS/DOIS_N"/>
</dbReference>
<dbReference type="InterPro" id="IPR056179">
    <property type="entry name" value="DHQS_C"/>
</dbReference>
<dbReference type="NCBIfam" id="TIGR01357">
    <property type="entry name" value="aroB"/>
    <property type="match status" value="1"/>
</dbReference>
<dbReference type="PANTHER" id="PTHR43622">
    <property type="entry name" value="3-DEHYDROQUINATE SYNTHASE"/>
    <property type="match status" value="1"/>
</dbReference>
<dbReference type="PANTHER" id="PTHR43622:SF7">
    <property type="entry name" value="3-DEHYDROQUINATE SYNTHASE, CHLOROPLASTIC"/>
    <property type="match status" value="1"/>
</dbReference>
<dbReference type="Pfam" id="PF01761">
    <property type="entry name" value="DHQ_synthase"/>
    <property type="match status" value="1"/>
</dbReference>
<dbReference type="Pfam" id="PF24621">
    <property type="entry name" value="DHQS_C"/>
    <property type="match status" value="1"/>
</dbReference>
<dbReference type="PIRSF" id="PIRSF001455">
    <property type="entry name" value="DHQ_synth"/>
    <property type="match status" value="1"/>
</dbReference>
<dbReference type="SUPFAM" id="SSF56796">
    <property type="entry name" value="Dehydroquinate synthase-like"/>
    <property type="match status" value="1"/>
</dbReference>
<organism>
    <name type="scientific">Helicobacter pylori (strain P12)</name>
    <dbReference type="NCBI Taxonomy" id="570508"/>
    <lineage>
        <taxon>Bacteria</taxon>
        <taxon>Pseudomonadati</taxon>
        <taxon>Campylobacterota</taxon>
        <taxon>Epsilonproteobacteria</taxon>
        <taxon>Campylobacterales</taxon>
        <taxon>Helicobacteraceae</taxon>
        <taxon>Helicobacter</taxon>
    </lineage>
</organism>
<sequence>MQEIVIPLKEKSYKVFLGELPEIELKQKALIISDSIVAGLHLSYLLKRLKALEVRVCVIESGEKYKNFHSLERILNNAFEMQLNRHSLMIALGGGVISDMVGFASSIYFRGIDFINIPTTLLAQVDASVGGKTGINTPYGKNLIGSFHQPKAVYIDLAFLKTLEKREFQAGVAEIIKMAVCFDKNLVERLEMKDLKDCLEEVIFQSVNIKAQVVMQDEKEQNIRAGLNYGHTFGHAIEKETDYERFLHGEAIAIGMRMANDLALSLGMLTLKEYERIENLLEKFDLIFHYKIIDIQKFYERLFLDKKSENKTIKFILPKGIGAFEVASHIPKETILKVLEKWH</sequence>
<reference key="1">
    <citation type="submission" date="2008-10" db="EMBL/GenBank/DDBJ databases">
        <title>The complete genome sequence of Helicobacter pylori strain P12.</title>
        <authorList>
            <person name="Fischer W."/>
            <person name="Windhager L."/>
            <person name="Karnholz A."/>
            <person name="Zeiller M."/>
            <person name="Zimmer R."/>
            <person name="Haas R."/>
        </authorList>
    </citation>
    <scope>NUCLEOTIDE SEQUENCE [LARGE SCALE GENOMIC DNA]</scope>
    <source>
        <strain>P12</strain>
    </source>
</reference>
<feature type="chain" id="PRO_1000094531" description="3-dehydroquinate synthase">
    <location>
        <begin position="1"/>
        <end position="343"/>
    </location>
</feature>
<feature type="binding site" evidence="1">
    <location>
        <begin position="61"/>
        <end position="66"/>
    </location>
    <ligand>
        <name>NAD(+)</name>
        <dbReference type="ChEBI" id="CHEBI:57540"/>
    </ligand>
</feature>
<feature type="binding site" evidence="1">
    <location>
        <begin position="95"/>
        <end position="99"/>
    </location>
    <ligand>
        <name>NAD(+)</name>
        <dbReference type="ChEBI" id="CHEBI:57540"/>
    </ligand>
</feature>
<feature type="binding site" evidence="1">
    <location>
        <begin position="119"/>
        <end position="120"/>
    </location>
    <ligand>
        <name>NAD(+)</name>
        <dbReference type="ChEBI" id="CHEBI:57540"/>
    </ligand>
</feature>
<feature type="binding site" evidence="1">
    <location>
        <position position="132"/>
    </location>
    <ligand>
        <name>NAD(+)</name>
        <dbReference type="ChEBI" id="CHEBI:57540"/>
    </ligand>
</feature>
<feature type="binding site" evidence="1">
    <location>
        <position position="141"/>
    </location>
    <ligand>
        <name>NAD(+)</name>
        <dbReference type="ChEBI" id="CHEBI:57540"/>
    </ligand>
</feature>
<feature type="binding site" evidence="1">
    <location>
        <begin position="159"/>
        <end position="162"/>
    </location>
    <ligand>
        <name>NAD(+)</name>
        <dbReference type="ChEBI" id="CHEBI:57540"/>
    </ligand>
</feature>
<feature type="binding site" evidence="1">
    <location>
        <position position="174"/>
    </location>
    <ligand>
        <name>Zn(2+)</name>
        <dbReference type="ChEBI" id="CHEBI:29105"/>
    </ligand>
</feature>
<feature type="binding site" evidence="1">
    <location>
        <position position="231"/>
    </location>
    <ligand>
        <name>Zn(2+)</name>
        <dbReference type="ChEBI" id="CHEBI:29105"/>
    </ligand>
</feature>
<feature type="binding site" evidence="1">
    <location>
        <position position="248"/>
    </location>
    <ligand>
        <name>Zn(2+)</name>
        <dbReference type="ChEBI" id="CHEBI:29105"/>
    </ligand>
</feature>